<organism>
    <name type="scientific">Mycobacterium tuberculosis (strain ATCC 25618 / H37Rv)</name>
    <dbReference type="NCBI Taxonomy" id="83332"/>
    <lineage>
        <taxon>Bacteria</taxon>
        <taxon>Bacillati</taxon>
        <taxon>Actinomycetota</taxon>
        <taxon>Actinomycetes</taxon>
        <taxon>Mycobacteriales</taxon>
        <taxon>Mycobacteriaceae</taxon>
        <taxon>Mycobacterium</taxon>
        <taxon>Mycobacterium tuberculosis complex</taxon>
    </lineage>
</organism>
<accession>P9WLI7</accession>
<accession>L0T950</accession>
<accession>P64949</accession>
<accession>Q10392</accession>
<sequence>MPGPHSPNPGVGTNGPAPYPEPSSHEPQALDYPHDLGAAEPAFAPGPADDAALPPAAYPGVPPQVSYPKRRHKRLLIGIVVALALVSAMTAAIIYGVRTNGANTAGTFSEGPAKTAIQGYLNALENRDVDTIVRNALCGIHDGVRDKRSDQALAKLSSDAFRKQFSQVEVTSIDKIVYWSQYQAQVLFTMQVTPAAGGPPRGQVQGIAQLLFQRGQVLVCSYVLRTAGSY</sequence>
<proteinExistence type="evidence at protein level"/>
<protein>
    <recommendedName>
        <fullName>Uncharacterized protein Rv2203</fullName>
    </recommendedName>
</protein>
<gene>
    <name type="ordered locus">Rv2203</name>
    <name type="ORF">MTCY190.14</name>
</gene>
<reference key="1">
    <citation type="journal article" date="1998" name="Nature">
        <title>Deciphering the biology of Mycobacterium tuberculosis from the complete genome sequence.</title>
        <authorList>
            <person name="Cole S.T."/>
            <person name="Brosch R."/>
            <person name="Parkhill J."/>
            <person name="Garnier T."/>
            <person name="Churcher C.M."/>
            <person name="Harris D.E."/>
            <person name="Gordon S.V."/>
            <person name="Eiglmeier K."/>
            <person name="Gas S."/>
            <person name="Barry C.E. III"/>
            <person name="Tekaia F."/>
            <person name="Badcock K."/>
            <person name="Basham D."/>
            <person name="Brown D."/>
            <person name="Chillingworth T."/>
            <person name="Connor R."/>
            <person name="Davies R.M."/>
            <person name="Devlin K."/>
            <person name="Feltwell T."/>
            <person name="Gentles S."/>
            <person name="Hamlin N."/>
            <person name="Holroyd S."/>
            <person name="Hornsby T."/>
            <person name="Jagels K."/>
            <person name="Krogh A."/>
            <person name="McLean J."/>
            <person name="Moule S."/>
            <person name="Murphy L.D."/>
            <person name="Oliver S."/>
            <person name="Osborne J."/>
            <person name="Quail M.A."/>
            <person name="Rajandream M.A."/>
            <person name="Rogers J."/>
            <person name="Rutter S."/>
            <person name="Seeger K."/>
            <person name="Skelton S."/>
            <person name="Squares S."/>
            <person name="Squares R."/>
            <person name="Sulston J.E."/>
            <person name="Taylor K."/>
            <person name="Whitehead S."/>
            <person name="Barrell B.G."/>
        </authorList>
    </citation>
    <scope>NUCLEOTIDE SEQUENCE [LARGE SCALE GENOMIC DNA]</scope>
    <source>
        <strain>ATCC 25618 / H37Rv</strain>
    </source>
</reference>
<reference key="2">
    <citation type="journal article" date="2011" name="Mol. Cell. Proteomics">
        <title>Proteogenomic analysis of Mycobacterium tuberculosis by high resolution mass spectrometry.</title>
        <authorList>
            <person name="Kelkar D.S."/>
            <person name="Kumar D."/>
            <person name="Kumar P."/>
            <person name="Balakrishnan L."/>
            <person name="Muthusamy B."/>
            <person name="Yadav A.K."/>
            <person name="Shrivastava P."/>
            <person name="Marimuthu A."/>
            <person name="Anand S."/>
            <person name="Sundaram H."/>
            <person name="Kingsbury R."/>
            <person name="Harsha H.C."/>
            <person name="Nair B."/>
            <person name="Prasad T.S."/>
            <person name="Chauhan D.S."/>
            <person name="Katoch K."/>
            <person name="Katoch V.M."/>
            <person name="Kumar P."/>
            <person name="Chaerkady R."/>
            <person name="Ramachandran S."/>
            <person name="Dash D."/>
            <person name="Pandey A."/>
        </authorList>
    </citation>
    <scope>IDENTIFICATION BY MASS SPECTROMETRY [LARGE SCALE ANALYSIS]</scope>
    <source>
        <strain>ATCC 25618 / H37Rv</strain>
    </source>
</reference>
<keyword id="KW-0472">Membrane</keyword>
<keyword id="KW-1185">Reference proteome</keyword>
<keyword id="KW-0812">Transmembrane</keyword>
<keyword id="KW-1133">Transmembrane helix</keyword>
<comment type="subcellular location">
    <subcellularLocation>
        <location evidence="3">Membrane</location>
        <topology evidence="3">Single-pass membrane protein</topology>
    </subcellularLocation>
</comment>
<feature type="chain" id="PRO_0000103972" description="Uncharacterized protein Rv2203">
    <location>
        <begin position="1"/>
        <end position="230"/>
    </location>
</feature>
<feature type="transmembrane region" description="Helical" evidence="1">
    <location>
        <begin position="75"/>
        <end position="95"/>
    </location>
</feature>
<feature type="region of interest" description="Disordered" evidence="2">
    <location>
        <begin position="1"/>
        <end position="57"/>
    </location>
</feature>
<feature type="compositionally biased region" description="Low complexity" evidence="2">
    <location>
        <begin position="38"/>
        <end position="55"/>
    </location>
</feature>
<evidence type="ECO:0000255" key="1"/>
<evidence type="ECO:0000256" key="2">
    <source>
        <dbReference type="SAM" id="MobiDB-lite"/>
    </source>
</evidence>
<evidence type="ECO:0000305" key="3"/>
<name>Y2203_MYCTU</name>
<dbReference type="EMBL" id="AL123456">
    <property type="protein sequence ID" value="CCP44980.1"/>
    <property type="molecule type" value="Genomic_DNA"/>
</dbReference>
<dbReference type="PIR" id="D70785">
    <property type="entry name" value="D70785"/>
</dbReference>
<dbReference type="RefSeq" id="NP_216719.1">
    <property type="nucleotide sequence ID" value="NC_000962.3"/>
</dbReference>
<dbReference type="RefSeq" id="WP_003411415.1">
    <property type="nucleotide sequence ID" value="NZ_NVQJ01000008.1"/>
</dbReference>
<dbReference type="SMR" id="P9WLI7"/>
<dbReference type="PaxDb" id="83332-Rv2203"/>
<dbReference type="DNASU" id="888318"/>
<dbReference type="GeneID" id="888318"/>
<dbReference type="KEGG" id="mtu:Rv2203"/>
<dbReference type="KEGG" id="mtv:RVBD_2203"/>
<dbReference type="TubercuList" id="Rv2203"/>
<dbReference type="eggNOG" id="ENOG50301YK">
    <property type="taxonomic scope" value="Bacteria"/>
</dbReference>
<dbReference type="InParanoid" id="P9WLI7"/>
<dbReference type="OrthoDB" id="4761684at2"/>
<dbReference type="Proteomes" id="UP000001584">
    <property type="component" value="Chromosome"/>
</dbReference>
<dbReference type="GO" id="GO:0005576">
    <property type="term" value="C:extracellular region"/>
    <property type="evidence" value="ECO:0007005"/>
    <property type="project" value="MTBBASE"/>
</dbReference>
<dbReference type="GO" id="GO:0016020">
    <property type="term" value="C:membrane"/>
    <property type="evidence" value="ECO:0007669"/>
    <property type="project" value="UniProtKB-SubCell"/>
</dbReference>